<dbReference type="EMBL" id="CP000859">
    <property type="protein sequence ID" value="ABW66350.1"/>
    <property type="molecule type" value="Genomic_DNA"/>
</dbReference>
<dbReference type="RefSeq" id="WP_012173969.1">
    <property type="nucleotide sequence ID" value="NC_009943.1"/>
</dbReference>
<dbReference type="SMR" id="A8ZU38"/>
<dbReference type="STRING" id="96561.Dole_0540"/>
<dbReference type="KEGG" id="dol:Dole_0540"/>
<dbReference type="eggNOG" id="COG0353">
    <property type="taxonomic scope" value="Bacteria"/>
</dbReference>
<dbReference type="HOGENOM" id="CLU_060739_1_0_7"/>
<dbReference type="OrthoDB" id="9802672at2"/>
<dbReference type="Proteomes" id="UP000008561">
    <property type="component" value="Chromosome"/>
</dbReference>
<dbReference type="GO" id="GO:0003677">
    <property type="term" value="F:DNA binding"/>
    <property type="evidence" value="ECO:0007669"/>
    <property type="project" value="UniProtKB-UniRule"/>
</dbReference>
<dbReference type="GO" id="GO:0008270">
    <property type="term" value="F:zinc ion binding"/>
    <property type="evidence" value="ECO:0007669"/>
    <property type="project" value="UniProtKB-KW"/>
</dbReference>
<dbReference type="GO" id="GO:0006310">
    <property type="term" value="P:DNA recombination"/>
    <property type="evidence" value="ECO:0007669"/>
    <property type="project" value="UniProtKB-UniRule"/>
</dbReference>
<dbReference type="GO" id="GO:0006281">
    <property type="term" value="P:DNA repair"/>
    <property type="evidence" value="ECO:0007669"/>
    <property type="project" value="UniProtKB-UniRule"/>
</dbReference>
<dbReference type="CDD" id="cd01025">
    <property type="entry name" value="TOPRIM_recR"/>
    <property type="match status" value="1"/>
</dbReference>
<dbReference type="Gene3D" id="3.30.60.80">
    <property type="match status" value="1"/>
</dbReference>
<dbReference type="Gene3D" id="3.40.1360.10">
    <property type="match status" value="1"/>
</dbReference>
<dbReference type="Gene3D" id="1.10.8.420">
    <property type="entry name" value="RecR Domain 1"/>
    <property type="match status" value="1"/>
</dbReference>
<dbReference type="HAMAP" id="MF_00017">
    <property type="entry name" value="RecR"/>
    <property type="match status" value="1"/>
</dbReference>
<dbReference type="InterPro" id="IPR000093">
    <property type="entry name" value="DNA_Rcmb_RecR"/>
</dbReference>
<dbReference type="InterPro" id="IPR023627">
    <property type="entry name" value="Rcmb_RecR"/>
</dbReference>
<dbReference type="InterPro" id="IPR015967">
    <property type="entry name" value="Rcmb_RecR_Znf"/>
</dbReference>
<dbReference type="InterPro" id="IPR006171">
    <property type="entry name" value="TOPRIM_dom"/>
</dbReference>
<dbReference type="InterPro" id="IPR034137">
    <property type="entry name" value="TOPRIM_RecR"/>
</dbReference>
<dbReference type="NCBIfam" id="TIGR00615">
    <property type="entry name" value="recR"/>
    <property type="match status" value="1"/>
</dbReference>
<dbReference type="PANTHER" id="PTHR30446">
    <property type="entry name" value="RECOMBINATION PROTEIN RECR"/>
    <property type="match status" value="1"/>
</dbReference>
<dbReference type="PANTHER" id="PTHR30446:SF0">
    <property type="entry name" value="RECOMBINATION PROTEIN RECR"/>
    <property type="match status" value="1"/>
</dbReference>
<dbReference type="Pfam" id="PF21175">
    <property type="entry name" value="RecR_C"/>
    <property type="match status" value="1"/>
</dbReference>
<dbReference type="Pfam" id="PF21176">
    <property type="entry name" value="RecR_HhH"/>
    <property type="match status" value="1"/>
</dbReference>
<dbReference type="Pfam" id="PF02132">
    <property type="entry name" value="RecR_ZnF"/>
    <property type="match status" value="1"/>
</dbReference>
<dbReference type="Pfam" id="PF13662">
    <property type="entry name" value="Toprim_4"/>
    <property type="match status" value="1"/>
</dbReference>
<dbReference type="SMART" id="SM00493">
    <property type="entry name" value="TOPRIM"/>
    <property type="match status" value="1"/>
</dbReference>
<dbReference type="SUPFAM" id="SSF111304">
    <property type="entry name" value="Recombination protein RecR"/>
    <property type="match status" value="1"/>
</dbReference>
<dbReference type="PROSITE" id="PS01300">
    <property type="entry name" value="RECR"/>
    <property type="match status" value="1"/>
</dbReference>
<dbReference type="PROSITE" id="PS50880">
    <property type="entry name" value="TOPRIM"/>
    <property type="match status" value="1"/>
</dbReference>
<comment type="function">
    <text evidence="1">May play a role in DNA repair. It seems to be involved in an RecBC-independent recombinational process of DNA repair. It may act with RecF and RecO.</text>
</comment>
<comment type="similarity">
    <text evidence="1">Belongs to the RecR family.</text>
</comment>
<evidence type="ECO:0000255" key="1">
    <source>
        <dbReference type="HAMAP-Rule" id="MF_00017"/>
    </source>
</evidence>
<feature type="chain" id="PRO_1000195380" description="Recombination protein RecR">
    <location>
        <begin position="1"/>
        <end position="199"/>
    </location>
</feature>
<feature type="domain" description="Toprim" evidence="1">
    <location>
        <begin position="81"/>
        <end position="176"/>
    </location>
</feature>
<feature type="zinc finger region" description="C4-type" evidence="1">
    <location>
        <begin position="58"/>
        <end position="73"/>
    </location>
</feature>
<organism>
    <name type="scientific">Desulfosudis oleivorans (strain DSM 6200 / JCM 39069 / Hxd3)</name>
    <name type="common">Desulfococcus oleovorans</name>
    <dbReference type="NCBI Taxonomy" id="96561"/>
    <lineage>
        <taxon>Bacteria</taxon>
        <taxon>Pseudomonadati</taxon>
        <taxon>Thermodesulfobacteriota</taxon>
        <taxon>Desulfobacteria</taxon>
        <taxon>Desulfobacterales</taxon>
        <taxon>Desulfosudaceae</taxon>
        <taxon>Desulfosudis</taxon>
    </lineage>
</organism>
<gene>
    <name evidence="1" type="primary">recR</name>
    <name type="ordered locus">Dole_0540</name>
</gene>
<protein>
    <recommendedName>
        <fullName evidence="1">Recombination protein RecR</fullName>
    </recommendedName>
</protein>
<accession>A8ZU38</accession>
<proteinExistence type="inferred from homology"/>
<keyword id="KW-0227">DNA damage</keyword>
<keyword id="KW-0233">DNA recombination</keyword>
<keyword id="KW-0234">DNA repair</keyword>
<keyword id="KW-0479">Metal-binding</keyword>
<keyword id="KW-1185">Reference proteome</keyword>
<keyword id="KW-0862">Zinc</keyword>
<keyword id="KW-0863">Zinc-finger</keyword>
<sequence length="199" mass="21682">MLPYPPSIRNAISHLSRLPGIGQKTAERLAMHLLHVPDRAVHELARSLVDLKKNTRMCSVCFTLSDTPVCAICGDPDRNASLLCVVEGPTEVMAIEKTAAFKGVYHVLHGVLSPMDGIGPDDIRIRELVDRVKKGIVKEIVLATDTRVEGEATAAYLVEVLKPFPVTVTRIASGMPAGGEVRYSDPVTLKNAMEKRYAL</sequence>
<reference key="1">
    <citation type="submission" date="2007-10" db="EMBL/GenBank/DDBJ databases">
        <title>Complete sequence of Desulfococcus oleovorans Hxd3.</title>
        <authorList>
            <consortium name="US DOE Joint Genome Institute"/>
            <person name="Copeland A."/>
            <person name="Lucas S."/>
            <person name="Lapidus A."/>
            <person name="Barry K."/>
            <person name="Glavina del Rio T."/>
            <person name="Dalin E."/>
            <person name="Tice H."/>
            <person name="Pitluck S."/>
            <person name="Kiss H."/>
            <person name="Brettin T."/>
            <person name="Bruce D."/>
            <person name="Detter J.C."/>
            <person name="Han C."/>
            <person name="Schmutz J."/>
            <person name="Larimer F."/>
            <person name="Land M."/>
            <person name="Hauser L."/>
            <person name="Kyrpides N."/>
            <person name="Kim E."/>
            <person name="Wawrik B."/>
            <person name="Richardson P."/>
        </authorList>
    </citation>
    <scope>NUCLEOTIDE SEQUENCE [LARGE SCALE GENOMIC DNA]</scope>
    <source>
        <strain>DSM 6200 / JCM 39069 / Hxd3</strain>
    </source>
</reference>
<name>RECR_DESOH</name>